<name>UREG_STAAN</name>
<accession>Q7A427</accession>
<organism>
    <name type="scientific">Staphylococcus aureus (strain N315)</name>
    <dbReference type="NCBI Taxonomy" id="158879"/>
    <lineage>
        <taxon>Bacteria</taxon>
        <taxon>Bacillati</taxon>
        <taxon>Bacillota</taxon>
        <taxon>Bacilli</taxon>
        <taxon>Bacillales</taxon>
        <taxon>Staphylococcaceae</taxon>
        <taxon>Staphylococcus</taxon>
    </lineage>
</organism>
<evidence type="ECO:0000255" key="1">
    <source>
        <dbReference type="HAMAP-Rule" id="MF_01389"/>
    </source>
</evidence>
<comment type="function">
    <text evidence="1">Facilitates the functional incorporation of the urease nickel metallocenter. This process requires GTP hydrolysis, probably effectuated by UreG.</text>
</comment>
<comment type="subunit">
    <text evidence="1">Homodimer. UreD, UreF and UreG form a complex that acts as a GTP-hydrolysis-dependent molecular chaperone, activating the urease apoprotein by helping to assemble the nickel containing metallocenter of UreC. The UreE protein probably delivers the nickel.</text>
</comment>
<comment type="subcellular location">
    <subcellularLocation>
        <location evidence="1">Cytoplasm</location>
    </subcellularLocation>
</comment>
<comment type="similarity">
    <text evidence="1">Belongs to the SIMIBI class G3E GTPase family. UreG subfamily.</text>
</comment>
<feature type="chain" id="PRO_1000145231" description="Urease accessory protein UreG">
    <location>
        <begin position="1"/>
        <end position="204"/>
    </location>
</feature>
<feature type="binding site" evidence="1">
    <location>
        <begin position="11"/>
        <end position="18"/>
    </location>
    <ligand>
        <name>GTP</name>
        <dbReference type="ChEBI" id="CHEBI:37565"/>
    </ligand>
</feature>
<keyword id="KW-0143">Chaperone</keyword>
<keyword id="KW-0963">Cytoplasm</keyword>
<keyword id="KW-0342">GTP-binding</keyword>
<keyword id="KW-0996">Nickel insertion</keyword>
<keyword id="KW-0547">Nucleotide-binding</keyword>
<proteinExistence type="evidence at protein level"/>
<reference key="1">
    <citation type="journal article" date="2001" name="Lancet">
        <title>Whole genome sequencing of meticillin-resistant Staphylococcus aureus.</title>
        <authorList>
            <person name="Kuroda M."/>
            <person name="Ohta T."/>
            <person name="Uchiyama I."/>
            <person name="Baba T."/>
            <person name="Yuzawa H."/>
            <person name="Kobayashi I."/>
            <person name="Cui L."/>
            <person name="Oguchi A."/>
            <person name="Aoki K."/>
            <person name="Nagai Y."/>
            <person name="Lian J.-Q."/>
            <person name="Ito T."/>
            <person name="Kanamori M."/>
            <person name="Matsumaru H."/>
            <person name="Maruyama A."/>
            <person name="Murakami H."/>
            <person name="Hosoyama A."/>
            <person name="Mizutani-Ui Y."/>
            <person name="Takahashi N.K."/>
            <person name="Sawano T."/>
            <person name="Inoue R."/>
            <person name="Kaito C."/>
            <person name="Sekimizu K."/>
            <person name="Hirakawa H."/>
            <person name="Kuhara S."/>
            <person name="Goto S."/>
            <person name="Yabuzaki J."/>
            <person name="Kanehisa M."/>
            <person name="Yamashita A."/>
            <person name="Oshima K."/>
            <person name="Furuya K."/>
            <person name="Yoshino C."/>
            <person name="Shiba T."/>
            <person name="Hattori M."/>
            <person name="Ogasawara N."/>
            <person name="Hayashi H."/>
            <person name="Hiramatsu K."/>
        </authorList>
    </citation>
    <scope>NUCLEOTIDE SEQUENCE [LARGE SCALE GENOMIC DNA]</scope>
    <source>
        <strain>N315</strain>
    </source>
</reference>
<reference key="2">
    <citation type="submission" date="2007-10" db="UniProtKB">
        <title>Shotgun proteomic analysis of total and membrane protein extracts of S. aureus strain N315.</title>
        <authorList>
            <person name="Vaezzadeh A.R."/>
            <person name="Deshusses J."/>
            <person name="Lescuyer P."/>
            <person name="Hochstrasser D.F."/>
        </authorList>
    </citation>
    <scope>IDENTIFICATION BY MASS SPECTROMETRY [LARGE SCALE ANALYSIS]</scope>
    <source>
        <strain>N315</strain>
    </source>
</reference>
<protein>
    <recommendedName>
        <fullName evidence="1">Urease accessory protein UreG</fullName>
    </recommendedName>
</protein>
<sequence>MANPIKIGIGGPVGAGKTQLIEKVVKRLSKEMSIGVITNDIYTKEDEKILVNSGVLPESRIIGVETGGCPHTAIREDASMNFAAIDELLERHDDIELIFIESGGDNLAATFSPELVDFSIYIIDVAQGEKIPRKGGQGMIKSDFFVINKTDLAPYVGASLEQMAEDTKVFRGKRPFTFTNLKTDEGLDEVIDWIERDTLLKGLS</sequence>
<dbReference type="EMBL" id="BA000018">
    <property type="protein sequence ID" value="BAB43385.1"/>
    <property type="molecule type" value="Genomic_DNA"/>
</dbReference>
<dbReference type="PIR" id="H90027">
    <property type="entry name" value="H90027"/>
</dbReference>
<dbReference type="RefSeq" id="WP_000002973.1">
    <property type="nucleotide sequence ID" value="NC_002745.2"/>
</dbReference>
<dbReference type="SMR" id="Q7A427"/>
<dbReference type="EnsemblBacteria" id="BAB43385">
    <property type="protein sequence ID" value="BAB43385"/>
    <property type="gene ID" value="BAB43385"/>
</dbReference>
<dbReference type="KEGG" id="sau:SA2087"/>
<dbReference type="HOGENOM" id="CLU_072144_1_0_9"/>
<dbReference type="GO" id="GO:0005737">
    <property type="term" value="C:cytoplasm"/>
    <property type="evidence" value="ECO:0007669"/>
    <property type="project" value="UniProtKB-SubCell"/>
</dbReference>
<dbReference type="GO" id="GO:0005525">
    <property type="term" value="F:GTP binding"/>
    <property type="evidence" value="ECO:0007669"/>
    <property type="project" value="UniProtKB-KW"/>
</dbReference>
<dbReference type="GO" id="GO:0003924">
    <property type="term" value="F:GTPase activity"/>
    <property type="evidence" value="ECO:0007669"/>
    <property type="project" value="InterPro"/>
</dbReference>
<dbReference type="GO" id="GO:0016151">
    <property type="term" value="F:nickel cation binding"/>
    <property type="evidence" value="ECO:0007669"/>
    <property type="project" value="UniProtKB-UniRule"/>
</dbReference>
<dbReference type="GO" id="GO:0043419">
    <property type="term" value="P:urea catabolic process"/>
    <property type="evidence" value="ECO:0007669"/>
    <property type="project" value="InterPro"/>
</dbReference>
<dbReference type="CDD" id="cd05540">
    <property type="entry name" value="UreG"/>
    <property type="match status" value="1"/>
</dbReference>
<dbReference type="Gene3D" id="3.40.50.300">
    <property type="entry name" value="P-loop containing nucleotide triphosphate hydrolases"/>
    <property type="match status" value="1"/>
</dbReference>
<dbReference type="HAMAP" id="MF_01389">
    <property type="entry name" value="UreG"/>
    <property type="match status" value="1"/>
</dbReference>
<dbReference type="InterPro" id="IPR003495">
    <property type="entry name" value="CobW/HypB/UreG_nucleotide-bd"/>
</dbReference>
<dbReference type="InterPro" id="IPR027417">
    <property type="entry name" value="P-loop_NTPase"/>
</dbReference>
<dbReference type="InterPro" id="IPR004400">
    <property type="entry name" value="UreG"/>
</dbReference>
<dbReference type="NCBIfam" id="TIGR00101">
    <property type="entry name" value="ureG"/>
    <property type="match status" value="1"/>
</dbReference>
<dbReference type="PANTHER" id="PTHR31715">
    <property type="entry name" value="UREASE ACCESSORY PROTEIN G"/>
    <property type="match status" value="1"/>
</dbReference>
<dbReference type="PANTHER" id="PTHR31715:SF0">
    <property type="entry name" value="UREASE ACCESSORY PROTEIN G"/>
    <property type="match status" value="1"/>
</dbReference>
<dbReference type="Pfam" id="PF02492">
    <property type="entry name" value="cobW"/>
    <property type="match status" value="1"/>
</dbReference>
<dbReference type="PIRSF" id="PIRSF005624">
    <property type="entry name" value="Ni-bind_GTPase"/>
    <property type="match status" value="1"/>
</dbReference>
<dbReference type="SUPFAM" id="SSF52540">
    <property type="entry name" value="P-loop containing nucleoside triphosphate hydrolases"/>
    <property type="match status" value="1"/>
</dbReference>
<gene>
    <name evidence="1" type="primary">ureG</name>
    <name type="ordered locus">SA2087</name>
</gene>